<feature type="chain" id="PRO_0000321085" description="Aspartate carbamoyltransferase catalytic subunit">
    <location>
        <begin position="1"/>
        <end position="310"/>
    </location>
</feature>
<feature type="binding site" evidence="1">
    <location>
        <position position="58"/>
    </location>
    <ligand>
        <name>carbamoyl phosphate</name>
        <dbReference type="ChEBI" id="CHEBI:58228"/>
    </ligand>
</feature>
<feature type="binding site" evidence="1">
    <location>
        <position position="59"/>
    </location>
    <ligand>
        <name>carbamoyl phosphate</name>
        <dbReference type="ChEBI" id="CHEBI:58228"/>
    </ligand>
</feature>
<feature type="binding site" evidence="1">
    <location>
        <position position="86"/>
    </location>
    <ligand>
        <name>L-aspartate</name>
        <dbReference type="ChEBI" id="CHEBI:29991"/>
    </ligand>
</feature>
<feature type="binding site" evidence="1">
    <location>
        <position position="108"/>
    </location>
    <ligand>
        <name>carbamoyl phosphate</name>
        <dbReference type="ChEBI" id="CHEBI:58228"/>
    </ligand>
</feature>
<feature type="binding site" evidence="1">
    <location>
        <position position="136"/>
    </location>
    <ligand>
        <name>carbamoyl phosphate</name>
        <dbReference type="ChEBI" id="CHEBI:58228"/>
    </ligand>
</feature>
<feature type="binding site" evidence="1">
    <location>
        <position position="139"/>
    </location>
    <ligand>
        <name>carbamoyl phosphate</name>
        <dbReference type="ChEBI" id="CHEBI:58228"/>
    </ligand>
</feature>
<feature type="binding site" evidence="1">
    <location>
        <position position="169"/>
    </location>
    <ligand>
        <name>L-aspartate</name>
        <dbReference type="ChEBI" id="CHEBI:29991"/>
    </ligand>
</feature>
<feature type="binding site" evidence="1">
    <location>
        <position position="222"/>
    </location>
    <ligand>
        <name>L-aspartate</name>
        <dbReference type="ChEBI" id="CHEBI:29991"/>
    </ligand>
</feature>
<feature type="binding site" evidence="1">
    <location>
        <position position="264"/>
    </location>
    <ligand>
        <name>carbamoyl phosphate</name>
        <dbReference type="ChEBI" id="CHEBI:58228"/>
    </ligand>
</feature>
<feature type="binding site" evidence="1">
    <location>
        <position position="265"/>
    </location>
    <ligand>
        <name>carbamoyl phosphate</name>
        <dbReference type="ChEBI" id="CHEBI:58228"/>
    </ligand>
</feature>
<sequence>MSYVKKDLISTKDLSKDDIFSILSLAKDYKALNLEPVKKDPILKGVTVVNAFFENSTRTRTSFEIAAKRLGADAINFSSSTSSTNKGETLIDTIHNIEAMKTDIFIVRHYSSGAAKFVTKNTPSCVVNAGDGCNEHPTQALLDLLTIYEAKGSFSGLSVTIIGDIFHSRVARSNIYAMQTLGIKVKLFGPPMFMQNAEVFGCHICKDMDEAVMGSDAIIMLRIQLERSDGEVAFPSIREYSKYFGLTKTRMQKAKDDVIILHPGPINRGVEINSDVADDARFSSILDQVENGVAIRMAVLKTIYQNKFKA</sequence>
<dbReference type="EC" id="2.1.3.2" evidence="1"/>
<dbReference type="EMBL" id="CP000487">
    <property type="protein sequence ID" value="ABK83188.1"/>
    <property type="molecule type" value="Genomic_DNA"/>
</dbReference>
<dbReference type="RefSeq" id="WP_002850456.1">
    <property type="nucleotide sequence ID" value="NC_008599.1"/>
</dbReference>
<dbReference type="SMR" id="A0RQX6"/>
<dbReference type="KEGG" id="cff:CFF8240_1475"/>
<dbReference type="eggNOG" id="COG0540">
    <property type="taxonomic scope" value="Bacteria"/>
</dbReference>
<dbReference type="HOGENOM" id="CLU_043846_2_0_7"/>
<dbReference type="UniPathway" id="UPA00070">
    <property type="reaction ID" value="UER00116"/>
</dbReference>
<dbReference type="Proteomes" id="UP000000760">
    <property type="component" value="Chromosome"/>
</dbReference>
<dbReference type="GO" id="GO:0005829">
    <property type="term" value="C:cytosol"/>
    <property type="evidence" value="ECO:0007669"/>
    <property type="project" value="TreeGrafter"/>
</dbReference>
<dbReference type="GO" id="GO:0016597">
    <property type="term" value="F:amino acid binding"/>
    <property type="evidence" value="ECO:0007669"/>
    <property type="project" value="InterPro"/>
</dbReference>
<dbReference type="GO" id="GO:0004070">
    <property type="term" value="F:aspartate carbamoyltransferase activity"/>
    <property type="evidence" value="ECO:0007669"/>
    <property type="project" value="UniProtKB-UniRule"/>
</dbReference>
<dbReference type="GO" id="GO:0006207">
    <property type="term" value="P:'de novo' pyrimidine nucleobase biosynthetic process"/>
    <property type="evidence" value="ECO:0007669"/>
    <property type="project" value="InterPro"/>
</dbReference>
<dbReference type="GO" id="GO:0044205">
    <property type="term" value="P:'de novo' UMP biosynthetic process"/>
    <property type="evidence" value="ECO:0007669"/>
    <property type="project" value="UniProtKB-UniRule"/>
</dbReference>
<dbReference type="GO" id="GO:0006520">
    <property type="term" value="P:amino acid metabolic process"/>
    <property type="evidence" value="ECO:0007669"/>
    <property type="project" value="InterPro"/>
</dbReference>
<dbReference type="Gene3D" id="3.40.50.1370">
    <property type="entry name" value="Aspartate/ornithine carbamoyltransferase"/>
    <property type="match status" value="2"/>
</dbReference>
<dbReference type="HAMAP" id="MF_00001">
    <property type="entry name" value="Asp_carb_tr"/>
    <property type="match status" value="1"/>
</dbReference>
<dbReference type="InterPro" id="IPR006132">
    <property type="entry name" value="Asp/Orn_carbamoyltranf_P-bd"/>
</dbReference>
<dbReference type="InterPro" id="IPR006130">
    <property type="entry name" value="Asp/Orn_carbamoylTrfase"/>
</dbReference>
<dbReference type="InterPro" id="IPR036901">
    <property type="entry name" value="Asp/Orn_carbamoylTrfase_sf"/>
</dbReference>
<dbReference type="InterPro" id="IPR002082">
    <property type="entry name" value="Asp_carbamoyltransf"/>
</dbReference>
<dbReference type="InterPro" id="IPR006131">
    <property type="entry name" value="Asp_carbamoyltransf_Asp/Orn-bd"/>
</dbReference>
<dbReference type="NCBIfam" id="TIGR00670">
    <property type="entry name" value="asp_carb_tr"/>
    <property type="match status" value="1"/>
</dbReference>
<dbReference type="NCBIfam" id="NF002032">
    <property type="entry name" value="PRK00856.1"/>
    <property type="match status" value="1"/>
</dbReference>
<dbReference type="PANTHER" id="PTHR45753:SF6">
    <property type="entry name" value="ASPARTATE CARBAMOYLTRANSFERASE"/>
    <property type="match status" value="1"/>
</dbReference>
<dbReference type="PANTHER" id="PTHR45753">
    <property type="entry name" value="ORNITHINE CARBAMOYLTRANSFERASE, MITOCHONDRIAL"/>
    <property type="match status" value="1"/>
</dbReference>
<dbReference type="Pfam" id="PF00185">
    <property type="entry name" value="OTCace"/>
    <property type="match status" value="1"/>
</dbReference>
<dbReference type="Pfam" id="PF02729">
    <property type="entry name" value="OTCace_N"/>
    <property type="match status" value="1"/>
</dbReference>
<dbReference type="PRINTS" id="PR00100">
    <property type="entry name" value="AOTCASE"/>
</dbReference>
<dbReference type="PRINTS" id="PR00101">
    <property type="entry name" value="ATCASE"/>
</dbReference>
<dbReference type="SUPFAM" id="SSF53671">
    <property type="entry name" value="Aspartate/ornithine carbamoyltransferase"/>
    <property type="match status" value="1"/>
</dbReference>
<dbReference type="PROSITE" id="PS00097">
    <property type="entry name" value="CARBAMOYLTRANSFERASE"/>
    <property type="match status" value="1"/>
</dbReference>
<keyword id="KW-0665">Pyrimidine biosynthesis</keyword>
<keyword id="KW-0808">Transferase</keyword>
<name>PYRB_CAMFF</name>
<organism>
    <name type="scientific">Campylobacter fetus subsp. fetus (strain 82-40)</name>
    <dbReference type="NCBI Taxonomy" id="360106"/>
    <lineage>
        <taxon>Bacteria</taxon>
        <taxon>Pseudomonadati</taxon>
        <taxon>Campylobacterota</taxon>
        <taxon>Epsilonproteobacteria</taxon>
        <taxon>Campylobacterales</taxon>
        <taxon>Campylobacteraceae</taxon>
        <taxon>Campylobacter</taxon>
    </lineage>
</organism>
<accession>A0RQX6</accession>
<protein>
    <recommendedName>
        <fullName evidence="1">Aspartate carbamoyltransferase catalytic subunit</fullName>
        <ecNumber evidence="1">2.1.3.2</ecNumber>
    </recommendedName>
    <alternativeName>
        <fullName evidence="1">Aspartate transcarbamylase</fullName>
        <shortName evidence="1">ATCase</shortName>
    </alternativeName>
</protein>
<comment type="function">
    <text evidence="1">Catalyzes the condensation of carbamoyl phosphate and aspartate to form carbamoyl aspartate and inorganic phosphate, the committed step in the de novo pyrimidine nucleotide biosynthesis pathway.</text>
</comment>
<comment type="catalytic activity">
    <reaction evidence="1">
        <text>carbamoyl phosphate + L-aspartate = N-carbamoyl-L-aspartate + phosphate + H(+)</text>
        <dbReference type="Rhea" id="RHEA:20013"/>
        <dbReference type="ChEBI" id="CHEBI:15378"/>
        <dbReference type="ChEBI" id="CHEBI:29991"/>
        <dbReference type="ChEBI" id="CHEBI:32814"/>
        <dbReference type="ChEBI" id="CHEBI:43474"/>
        <dbReference type="ChEBI" id="CHEBI:58228"/>
        <dbReference type="EC" id="2.1.3.2"/>
    </reaction>
</comment>
<comment type="pathway">
    <text evidence="1">Pyrimidine metabolism; UMP biosynthesis via de novo pathway; (S)-dihydroorotate from bicarbonate: step 2/3.</text>
</comment>
<comment type="subunit">
    <text evidence="1">Heterododecamer (2C3:3R2) of six catalytic PyrB chains organized as two trimers (C3), and six regulatory PyrI chains organized as three dimers (R2).</text>
</comment>
<comment type="similarity">
    <text evidence="1">Belongs to the aspartate/ornithine carbamoyltransferase superfamily. ATCase family.</text>
</comment>
<evidence type="ECO:0000255" key="1">
    <source>
        <dbReference type="HAMAP-Rule" id="MF_00001"/>
    </source>
</evidence>
<gene>
    <name evidence="1" type="primary">pyrB</name>
    <name type="ordered locus">CFF8240_1475</name>
</gene>
<reference key="1">
    <citation type="submission" date="2006-11" db="EMBL/GenBank/DDBJ databases">
        <title>Sequence of Campylobacter fetus subsp. fetus 82-40.</title>
        <authorList>
            <person name="Fouts D.E."/>
            <person name="Nelson K.E."/>
        </authorList>
    </citation>
    <scope>NUCLEOTIDE SEQUENCE [LARGE SCALE GENOMIC DNA]</scope>
    <source>
        <strain>82-40</strain>
    </source>
</reference>
<proteinExistence type="inferred from homology"/>